<keyword id="KW-0002">3D-structure</keyword>
<proteinExistence type="evidence at protein level"/>
<dbReference type="EMBL" id="AF031901">
    <property type="protein sequence ID" value="AAC29018.1"/>
    <property type="molecule type" value="Genomic_DNA"/>
</dbReference>
<dbReference type="RefSeq" id="YP_002300293.1">
    <property type="nucleotide sequence ID" value="NC_011421.1"/>
</dbReference>
<dbReference type="PDB" id="8KH1">
    <property type="method" value="NMR"/>
    <property type="chains" value="A=1-117"/>
</dbReference>
<dbReference type="PDBsum" id="8KH1"/>
<dbReference type="SMR" id="O48403"/>
<dbReference type="GeneID" id="7009006"/>
<dbReference type="KEGG" id="vg:7009006"/>
<feature type="chain" id="PRO_0000106155" description="Putative gene 49 protein">
    <location>
        <begin position="1"/>
        <end position="117"/>
    </location>
</feature>
<gene>
    <name type="primary">49</name>
</gene>
<organismHost>
    <name type="scientific">Bacillus subtilis</name>
    <dbReference type="NCBI Taxonomy" id="1423"/>
</organismHost>
<organism>
    <name type="scientific">Bacillus phage SP01</name>
    <name type="common">Bacteriophage SP01</name>
    <dbReference type="NCBI Taxonomy" id="2884427"/>
    <lineage>
        <taxon>Viruses</taxon>
        <taxon>Duplodnaviria</taxon>
        <taxon>Heunggongvirae</taxon>
        <taxon>Uroviricota</taxon>
        <taxon>Caudoviricetes</taxon>
        <taxon>Herelleviridae</taxon>
        <taxon>Spounavirinae</taxon>
        <taxon>Okubovirus</taxon>
        <taxon>Okubovirus SPO1</taxon>
    </lineage>
</organism>
<reference key="1">
    <citation type="journal article" date="1998" name="Virology">
        <title>Genes and regulatory sites of the 'host-takeover module' in the terminal redundancy of Bacillus subtilis bacteriophage SPO1.</title>
        <authorList>
            <person name="Stewart C.R."/>
            <person name="Gaslightwala I."/>
            <person name="Hinata K."/>
            <person name="Krolikowski K.A."/>
            <person name="Needleman D.S."/>
            <person name="Peng A.S.-Y."/>
            <person name="Peterman M.A."/>
            <person name="Tobias A."/>
            <person name="Wei P."/>
        </authorList>
    </citation>
    <scope>NUCLEOTIDE SEQUENCE [GENOMIC DNA]</scope>
</reference>
<sequence length="117" mass="13332">MIKAAVTKESLYRMNTLMEAFQGFLGLDLGEFTFKVKPGVFLLTDVKSYLIGDKYDDAFNALIDFVLRNDRDAVEGTETDVSIRLGLSPSDMVVKRQDKTFTFTHGDLEFEVHWINL</sequence>
<protein>
    <recommendedName>
        <fullName>Putative gene 49 protein</fullName>
    </recommendedName>
</protein>
<name>GP49_BPSP1</name>
<accession>O48403</accession>